<organism>
    <name type="scientific">Pongo abelii</name>
    <name type="common">Sumatran orangutan</name>
    <name type="synonym">Pongo pygmaeus abelii</name>
    <dbReference type="NCBI Taxonomy" id="9601"/>
    <lineage>
        <taxon>Eukaryota</taxon>
        <taxon>Metazoa</taxon>
        <taxon>Chordata</taxon>
        <taxon>Craniata</taxon>
        <taxon>Vertebrata</taxon>
        <taxon>Euteleostomi</taxon>
        <taxon>Mammalia</taxon>
        <taxon>Eutheria</taxon>
        <taxon>Euarchontoglires</taxon>
        <taxon>Primates</taxon>
        <taxon>Haplorrhini</taxon>
        <taxon>Catarrhini</taxon>
        <taxon>Hominidae</taxon>
        <taxon>Pongo</taxon>
    </lineage>
</organism>
<reference key="1">
    <citation type="submission" date="2004-11" db="EMBL/GenBank/DDBJ databases">
        <authorList>
            <consortium name="The German cDNA consortium"/>
        </authorList>
    </citation>
    <scope>NUCLEOTIDE SEQUENCE [LARGE SCALE MRNA]</scope>
    <source>
        <tissue>Brain cortex</tissue>
    </source>
</reference>
<accession>Q5R581</accession>
<dbReference type="EMBL" id="CR860983">
    <property type="protein sequence ID" value="CAH93085.1"/>
    <property type="molecule type" value="mRNA"/>
</dbReference>
<dbReference type="RefSeq" id="NP_001126827.1">
    <property type="nucleotide sequence ID" value="NM_001133355.1"/>
</dbReference>
<dbReference type="SMR" id="Q5R581"/>
<dbReference type="FunCoup" id="Q5R581">
    <property type="interactions" value="1276"/>
</dbReference>
<dbReference type="STRING" id="9601.ENSPPYP00000007016"/>
<dbReference type="GeneID" id="100173833"/>
<dbReference type="KEGG" id="pon:100173833"/>
<dbReference type="CTD" id="3831"/>
<dbReference type="eggNOG" id="KOG1840">
    <property type="taxonomic scope" value="Eukaryota"/>
</dbReference>
<dbReference type="InParanoid" id="Q5R581"/>
<dbReference type="OrthoDB" id="413723at2759"/>
<dbReference type="Proteomes" id="UP000001595">
    <property type="component" value="Unplaced"/>
</dbReference>
<dbReference type="GO" id="GO:0031410">
    <property type="term" value="C:cytoplasmic vesicle"/>
    <property type="evidence" value="ECO:0007669"/>
    <property type="project" value="UniProtKB-KW"/>
</dbReference>
<dbReference type="GO" id="GO:0030426">
    <property type="term" value="C:growth cone"/>
    <property type="evidence" value="ECO:0000250"/>
    <property type="project" value="UniProtKB"/>
</dbReference>
<dbReference type="GO" id="GO:0005871">
    <property type="term" value="C:kinesin complex"/>
    <property type="evidence" value="ECO:0007669"/>
    <property type="project" value="InterPro"/>
</dbReference>
<dbReference type="GO" id="GO:0005874">
    <property type="term" value="C:microtubule"/>
    <property type="evidence" value="ECO:0007669"/>
    <property type="project" value="UniProtKB-KW"/>
</dbReference>
<dbReference type="GO" id="GO:0019894">
    <property type="term" value="F:kinesin binding"/>
    <property type="evidence" value="ECO:0007669"/>
    <property type="project" value="TreeGrafter"/>
</dbReference>
<dbReference type="GO" id="GO:0007155">
    <property type="term" value="P:cell adhesion"/>
    <property type="evidence" value="ECO:0007669"/>
    <property type="project" value="UniProtKB-KW"/>
</dbReference>
<dbReference type="GO" id="GO:0007018">
    <property type="term" value="P:microtubule-based movement"/>
    <property type="evidence" value="ECO:0007669"/>
    <property type="project" value="TreeGrafter"/>
</dbReference>
<dbReference type="FunFam" id="1.25.40.10:FF:000003">
    <property type="entry name" value="kinesin light chain isoform X1"/>
    <property type="match status" value="1"/>
</dbReference>
<dbReference type="Gene3D" id="1.25.40.10">
    <property type="entry name" value="Tetratricopeptide repeat domain"/>
    <property type="match status" value="1"/>
</dbReference>
<dbReference type="InterPro" id="IPR002151">
    <property type="entry name" value="Kinesin_light"/>
</dbReference>
<dbReference type="InterPro" id="IPR015792">
    <property type="entry name" value="Kinesin_light_repeat"/>
</dbReference>
<dbReference type="InterPro" id="IPR011990">
    <property type="entry name" value="TPR-like_helical_dom_sf"/>
</dbReference>
<dbReference type="InterPro" id="IPR019734">
    <property type="entry name" value="TPR_rpt"/>
</dbReference>
<dbReference type="PANTHER" id="PTHR45783">
    <property type="entry name" value="KINESIN LIGHT CHAIN"/>
    <property type="match status" value="1"/>
</dbReference>
<dbReference type="PANTHER" id="PTHR45783:SF7">
    <property type="entry name" value="KINESIN LIGHT CHAIN 1"/>
    <property type="match status" value="1"/>
</dbReference>
<dbReference type="Pfam" id="PF13374">
    <property type="entry name" value="TPR_10"/>
    <property type="match status" value="2"/>
</dbReference>
<dbReference type="Pfam" id="PF13424">
    <property type="entry name" value="TPR_12"/>
    <property type="match status" value="2"/>
</dbReference>
<dbReference type="PRINTS" id="PR00381">
    <property type="entry name" value="KINESINLIGHT"/>
</dbReference>
<dbReference type="SMART" id="SM00028">
    <property type="entry name" value="TPR"/>
    <property type="match status" value="5"/>
</dbReference>
<dbReference type="SUPFAM" id="SSF48452">
    <property type="entry name" value="TPR-like"/>
    <property type="match status" value="2"/>
</dbReference>
<dbReference type="PROSITE" id="PS01160">
    <property type="entry name" value="KINESIN_LIGHT"/>
    <property type="match status" value="4"/>
</dbReference>
<dbReference type="PROSITE" id="PS50005">
    <property type="entry name" value="TPR"/>
    <property type="match status" value="6"/>
</dbReference>
<dbReference type="PROSITE" id="PS50293">
    <property type="entry name" value="TPR_REGION"/>
    <property type="match status" value="2"/>
</dbReference>
<name>KLC1_PONAB</name>
<evidence type="ECO:0000250" key="1">
    <source>
        <dbReference type="UniProtKB" id="O88447"/>
    </source>
</evidence>
<evidence type="ECO:0000250" key="2">
    <source>
        <dbReference type="UniProtKB" id="P37285"/>
    </source>
</evidence>
<evidence type="ECO:0000250" key="3">
    <source>
        <dbReference type="UniProtKB" id="Q07866"/>
    </source>
</evidence>
<evidence type="ECO:0000255" key="4"/>
<evidence type="ECO:0000256" key="5">
    <source>
        <dbReference type="SAM" id="MobiDB-lite"/>
    </source>
</evidence>
<evidence type="ECO:0000305" key="6"/>
<protein>
    <recommendedName>
        <fullName>Kinesin light chain 1</fullName>
        <shortName>KLC 1</shortName>
    </recommendedName>
</protein>
<proteinExistence type="evidence at transcript level"/>
<comment type="function">
    <text evidence="2">Kinesin is a microtubule-associated force-producing protein that may play a role in organelle transport. The light chain may function in coupling of cargo to the heavy chain or in the modulation of its ATPase activity.</text>
</comment>
<comment type="subunit">
    <text evidence="2 3">Oligomeric complex composed of two heavy chains and two light chains. Interacts with SPAG9. Interacts with ATCAY; may link mitochondria to KLC1 and regulate mitochondria localization into neuron projections. Interacts (via TPR repeats) with TOR1A; the interaction associates TOR1A with the kinesin oligomeric complex. Interacts with BORCS5. Interacts with MAPK8IP3/JIP3 and NTRK2/TRKB; interaction with NTRK2/TRKB is mediated by MAPK8IP3/JIP3 (By similarity). Interacts with CLSTN1; phosphorylation at Ser-460 inhibits interaction with CLSTN1 (By similarity).</text>
</comment>
<comment type="subcellular location">
    <subcellularLocation>
        <location evidence="2">Cell projection</location>
        <location evidence="2">Growth cone</location>
    </subcellularLocation>
    <subcellularLocation>
        <location evidence="2">Cytoplasmic vesicle</location>
    </subcellularLocation>
    <subcellularLocation>
        <location evidence="2">Cytoplasm</location>
        <location evidence="2">Cytoskeleton</location>
    </subcellularLocation>
</comment>
<comment type="PTM">
    <text evidence="3">Phosphorylation at Ser-460 by ERK inhibits interaction with CLSTN1 and localization to cytoplasmic vesicles.</text>
</comment>
<comment type="similarity">
    <text evidence="6">Belongs to the kinesin light chain family.</text>
</comment>
<comment type="caution">
    <text evidence="6">It is uncertain whether Met-1 or Met-5 is the initiator.</text>
</comment>
<gene>
    <name type="primary">KLC1</name>
    <name type="synonym">KNS2</name>
</gene>
<keyword id="KW-0106">Calcium</keyword>
<keyword id="KW-0130">Cell adhesion</keyword>
<keyword id="KW-0966">Cell projection</keyword>
<keyword id="KW-0175">Coiled coil</keyword>
<keyword id="KW-0963">Cytoplasm</keyword>
<keyword id="KW-0968">Cytoplasmic vesicle</keyword>
<keyword id="KW-0206">Cytoskeleton</keyword>
<keyword id="KW-0493">Microtubule</keyword>
<keyword id="KW-0505">Motor protein</keyword>
<keyword id="KW-0597">Phosphoprotein</keyword>
<keyword id="KW-1185">Reference proteome</keyword>
<keyword id="KW-0677">Repeat</keyword>
<keyword id="KW-0802">TPR repeat</keyword>
<sequence>MYDNMSTMVYIKEDKLEKLTQDEIISKTKQVIQGLEALKNEHNSILQSLLETLKCLKKDDESNLVEEKSNMIRKSLEMLELGLSEAQVMMALSNHLNAVESEKQKLRAQVRRLCQENQWLRDELANTQQKLQKSEQSVAQLEEEKKHLEFMNQLKKYDDDISPSEDKDTDSTKEPLDDLFPNDEDDPGQGIQQQHSSAAAAAQQGDYEIPARLRTLHNLVIQYASQGRYEVAVPLCKQALEDLEKTSGHDHPDVATMLNILALVYRDQNKYKDAANLLNDALAIREKTLGKDHPAVAATLNNLAVLYGKRGKYKEAEPLCKRALEIREKVLGKDHPDVAKQLNNLALLCQNQGKYEEVEYYYQRALEIYQTKLGPDDPNVAKTKNNLASCYLKQGKFKQAETLYKEILTRAHEREFGSVDDENKPIWMHAEEREECKGKQKDGTSFGEYGGWYKACKVDSPTVTTTLKNLGALYRRQGKFEAAETLEEAAMRSRKQGLDNVHKQRVAEVLNDPENMEKRRSRESLNVDVVKYESGPDGGEEVSMSVEWNGMRKMKLGLVK</sequence>
<feature type="chain" id="PRO_0000234299" description="Kinesin light chain 1">
    <location>
        <begin position="1"/>
        <end position="560"/>
    </location>
</feature>
<feature type="repeat" description="TPR 1">
    <location>
        <begin position="213"/>
        <end position="246"/>
    </location>
</feature>
<feature type="repeat" description="TPR 2">
    <location>
        <begin position="255"/>
        <end position="288"/>
    </location>
</feature>
<feature type="repeat" description="TPR 3">
    <location>
        <begin position="297"/>
        <end position="330"/>
    </location>
</feature>
<feature type="repeat" description="TPR 4">
    <location>
        <begin position="339"/>
        <end position="372"/>
    </location>
</feature>
<feature type="repeat" description="TPR 5">
    <location>
        <begin position="381"/>
        <end position="414"/>
    </location>
</feature>
<feature type="repeat" description="TPR 6">
    <location>
        <begin position="464"/>
        <end position="497"/>
    </location>
</feature>
<feature type="region of interest" description="Disordered" evidence="5">
    <location>
        <begin position="155"/>
        <end position="203"/>
    </location>
</feature>
<feature type="coiled-coil region" evidence="4">
    <location>
        <begin position="31"/>
        <end position="99"/>
    </location>
</feature>
<feature type="compositionally biased region" description="Basic and acidic residues" evidence="5">
    <location>
        <begin position="155"/>
        <end position="176"/>
    </location>
</feature>
<feature type="compositionally biased region" description="Low complexity" evidence="5">
    <location>
        <begin position="192"/>
        <end position="203"/>
    </location>
</feature>
<feature type="modified residue" description="Phosphoserine" evidence="2">
    <location>
        <position position="162"/>
    </location>
</feature>
<feature type="modified residue" description="Phosphotyrosine" evidence="1">
    <location>
        <position position="449"/>
    </location>
</feature>
<feature type="modified residue" description="Phosphoserine" evidence="1">
    <location>
        <position position="460"/>
    </location>
</feature>
<feature type="modified residue" description="Phosphoserine; by AMPK" evidence="3">
    <location>
        <position position="521"/>
    </location>
</feature>
<feature type="modified residue" description="Phosphoserine; by AMPK" evidence="3">
    <location>
        <position position="524"/>
    </location>
</feature>